<accession>Q5HW17</accession>
<protein>
    <recommendedName>
        <fullName evidence="1">Large ribosomal subunit protein bL28</fullName>
    </recommendedName>
    <alternativeName>
        <fullName evidence="2">50S ribosomal protein L28</fullName>
    </alternativeName>
</protein>
<dbReference type="EMBL" id="CP000025">
    <property type="protein sequence ID" value="AAW35087.1"/>
    <property type="molecule type" value="Genomic_DNA"/>
</dbReference>
<dbReference type="RefSeq" id="WP_002854974.1">
    <property type="nucleotide sequence ID" value="NC_003912.7"/>
</dbReference>
<dbReference type="SMR" id="Q5HW17"/>
<dbReference type="KEGG" id="cjr:CJE0500"/>
<dbReference type="HOGENOM" id="CLU_064548_7_2_7"/>
<dbReference type="GO" id="GO:1990904">
    <property type="term" value="C:ribonucleoprotein complex"/>
    <property type="evidence" value="ECO:0007669"/>
    <property type="project" value="UniProtKB-KW"/>
</dbReference>
<dbReference type="GO" id="GO:0005840">
    <property type="term" value="C:ribosome"/>
    <property type="evidence" value="ECO:0007669"/>
    <property type="project" value="UniProtKB-KW"/>
</dbReference>
<dbReference type="GO" id="GO:0003735">
    <property type="term" value="F:structural constituent of ribosome"/>
    <property type="evidence" value="ECO:0007669"/>
    <property type="project" value="InterPro"/>
</dbReference>
<dbReference type="GO" id="GO:0006412">
    <property type="term" value="P:translation"/>
    <property type="evidence" value="ECO:0007669"/>
    <property type="project" value="UniProtKB-UniRule"/>
</dbReference>
<dbReference type="Gene3D" id="2.20.150.30">
    <property type="match status" value="1"/>
</dbReference>
<dbReference type="Gene3D" id="2.30.170.40">
    <property type="entry name" value="Ribosomal protein L28/L24"/>
    <property type="match status" value="1"/>
</dbReference>
<dbReference type="HAMAP" id="MF_00373">
    <property type="entry name" value="Ribosomal_bL28"/>
    <property type="match status" value="1"/>
</dbReference>
<dbReference type="InterPro" id="IPR050096">
    <property type="entry name" value="Bacterial_rp_bL28"/>
</dbReference>
<dbReference type="InterPro" id="IPR026569">
    <property type="entry name" value="Ribosomal_bL28"/>
</dbReference>
<dbReference type="InterPro" id="IPR034704">
    <property type="entry name" value="Ribosomal_bL28/bL31-like_sf"/>
</dbReference>
<dbReference type="InterPro" id="IPR001383">
    <property type="entry name" value="Ribosomal_bL28_bact-type"/>
</dbReference>
<dbReference type="InterPro" id="IPR037147">
    <property type="entry name" value="Ribosomal_bL28_sf"/>
</dbReference>
<dbReference type="NCBIfam" id="TIGR00009">
    <property type="entry name" value="L28"/>
    <property type="match status" value="1"/>
</dbReference>
<dbReference type="PANTHER" id="PTHR39080">
    <property type="entry name" value="50S RIBOSOMAL PROTEIN L28"/>
    <property type="match status" value="1"/>
</dbReference>
<dbReference type="PANTHER" id="PTHR39080:SF1">
    <property type="entry name" value="LARGE RIBOSOMAL SUBUNIT PROTEIN BL28A"/>
    <property type="match status" value="1"/>
</dbReference>
<dbReference type="Pfam" id="PF00830">
    <property type="entry name" value="Ribosomal_L28"/>
    <property type="match status" value="1"/>
</dbReference>
<dbReference type="SUPFAM" id="SSF143800">
    <property type="entry name" value="L28p-like"/>
    <property type="match status" value="1"/>
</dbReference>
<keyword id="KW-0687">Ribonucleoprotein</keyword>
<keyword id="KW-0689">Ribosomal protein</keyword>
<proteinExistence type="inferred from homology"/>
<reference key="1">
    <citation type="journal article" date="2005" name="PLoS Biol.">
        <title>Major structural differences and novel potential virulence mechanisms from the genomes of multiple Campylobacter species.</title>
        <authorList>
            <person name="Fouts D.E."/>
            <person name="Mongodin E.F."/>
            <person name="Mandrell R.E."/>
            <person name="Miller W.G."/>
            <person name="Rasko D.A."/>
            <person name="Ravel J."/>
            <person name="Brinkac L.M."/>
            <person name="DeBoy R.T."/>
            <person name="Parker C.T."/>
            <person name="Daugherty S.C."/>
            <person name="Dodson R.J."/>
            <person name="Durkin A.S."/>
            <person name="Madupu R."/>
            <person name="Sullivan S.A."/>
            <person name="Shetty J.U."/>
            <person name="Ayodeji M.A."/>
            <person name="Shvartsbeyn A."/>
            <person name="Schatz M.C."/>
            <person name="Badger J.H."/>
            <person name="Fraser C.M."/>
            <person name="Nelson K.E."/>
        </authorList>
    </citation>
    <scope>NUCLEOTIDE SEQUENCE [LARGE SCALE GENOMIC DNA]</scope>
    <source>
        <strain>RM1221</strain>
    </source>
</reference>
<feature type="chain" id="PRO_0000178450" description="Large ribosomal subunit protein bL28">
    <location>
        <begin position="1"/>
        <end position="64"/>
    </location>
</feature>
<evidence type="ECO:0000255" key="1">
    <source>
        <dbReference type="HAMAP-Rule" id="MF_00373"/>
    </source>
</evidence>
<evidence type="ECO:0000305" key="2"/>
<gene>
    <name evidence="1" type="primary">rpmB</name>
    <name type="ordered locus">CJE0500</name>
</gene>
<sequence>MARVCQITGKGPMVGNNVSHANNKTKRRFLPNLRTVRVTLEDGTTRKMRIAASTLRTLKKQNSK</sequence>
<comment type="similarity">
    <text evidence="1">Belongs to the bacterial ribosomal protein bL28 family.</text>
</comment>
<name>RL28_CAMJR</name>
<organism>
    <name type="scientific">Campylobacter jejuni (strain RM1221)</name>
    <dbReference type="NCBI Taxonomy" id="195099"/>
    <lineage>
        <taxon>Bacteria</taxon>
        <taxon>Pseudomonadati</taxon>
        <taxon>Campylobacterota</taxon>
        <taxon>Epsilonproteobacteria</taxon>
        <taxon>Campylobacterales</taxon>
        <taxon>Campylobacteraceae</taxon>
        <taxon>Campylobacter</taxon>
    </lineage>
</organism>